<keyword id="KW-0028">Amino-acid biosynthesis</keyword>
<keyword id="KW-0963">Cytoplasm</keyword>
<keyword id="KW-0220">Diaminopimelate biosynthesis</keyword>
<keyword id="KW-0457">Lysine biosynthesis</keyword>
<keyword id="KW-0520">NAD</keyword>
<keyword id="KW-0521">NADP</keyword>
<keyword id="KW-0560">Oxidoreductase</keyword>
<keyword id="KW-1185">Reference proteome</keyword>
<gene>
    <name evidence="1" type="primary">dapB</name>
    <name type="ordered locus">ECA3872</name>
</gene>
<name>DAPB_PECAS</name>
<reference key="1">
    <citation type="journal article" date="2004" name="Proc. Natl. Acad. Sci. U.S.A.">
        <title>Genome sequence of the enterobacterial phytopathogen Erwinia carotovora subsp. atroseptica and characterization of virulence factors.</title>
        <authorList>
            <person name="Bell K.S."/>
            <person name="Sebaihia M."/>
            <person name="Pritchard L."/>
            <person name="Holden M.T.G."/>
            <person name="Hyman L.J."/>
            <person name="Holeva M.C."/>
            <person name="Thomson N.R."/>
            <person name="Bentley S.D."/>
            <person name="Churcher L.J.C."/>
            <person name="Mungall K."/>
            <person name="Atkin R."/>
            <person name="Bason N."/>
            <person name="Brooks K."/>
            <person name="Chillingworth T."/>
            <person name="Clark K."/>
            <person name="Doggett J."/>
            <person name="Fraser A."/>
            <person name="Hance Z."/>
            <person name="Hauser H."/>
            <person name="Jagels K."/>
            <person name="Moule S."/>
            <person name="Norbertczak H."/>
            <person name="Ormond D."/>
            <person name="Price C."/>
            <person name="Quail M.A."/>
            <person name="Sanders M."/>
            <person name="Walker D."/>
            <person name="Whitehead S."/>
            <person name="Salmond G.P.C."/>
            <person name="Birch P.R.J."/>
            <person name="Parkhill J."/>
            <person name="Toth I.K."/>
        </authorList>
    </citation>
    <scope>NUCLEOTIDE SEQUENCE [LARGE SCALE GENOMIC DNA]</scope>
    <source>
        <strain>SCRI 1043 / ATCC BAA-672</strain>
    </source>
</reference>
<proteinExistence type="inferred from homology"/>
<organism>
    <name type="scientific">Pectobacterium atrosepticum (strain SCRI 1043 / ATCC BAA-672)</name>
    <name type="common">Erwinia carotovora subsp. atroseptica</name>
    <dbReference type="NCBI Taxonomy" id="218491"/>
    <lineage>
        <taxon>Bacteria</taxon>
        <taxon>Pseudomonadati</taxon>
        <taxon>Pseudomonadota</taxon>
        <taxon>Gammaproteobacteria</taxon>
        <taxon>Enterobacterales</taxon>
        <taxon>Pectobacteriaceae</taxon>
        <taxon>Pectobacterium</taxon>
    </lineage>
</organism>
<comment type="function">
    <text evidence="1">Catalyzes the conversion of 4-hydroxy-tetrahydrodipicolinate (HTPA) to tetrahydrodipicolinate.</text>
</comment>
<comment type="catalytic activity">
    <reaction evidence="1">
        <text>(S)-2,3,4,5-tetrahydrodipicolinate + NAD(+) + H2O = (2S,4S)-4-hydroxy-2,3,4,5-tetrahydrodipicolinate + NADH + H(+)</text>
        <dbReference type="Rhea" id="RHEA:35323"/>
        <dbReference type="ChEBI" id="CHEBI:15377"/>
        <dbReference type="ChEBI" id="CHEBI:15378"/>
        <dbReference type="ChEBI" id="CHEBI:16845"/>
        <dbReference type="ChEBI" id="CHEBI:57540"/>
        <dbReference type="ChEBI" id="CHEBI:57945"/>
        <dbReference type="ChEBI" id="CHEBI:67139"/>
        <dbReference type="EC" id="1.17.1.8"/>
    </reaction>
</comment>
<comment type="catalytic activity">
    <reaction evidence="1">
        <text>(S)-2,3,4,5-tetrahydrodipicolinate + NADP(+) + H2O = (2S,4S)-4-hydroxy-2,3,4,5-tetrahydrodipicolinate + NADPH + H(+)</text>
        <dbReference type="Rhea" id="RHEA:35331"/>
        <dbReference type="ChEBI" id="CHEBI:15377"/>
        <dbReference type="ChEBI" id="CHEBI:15378"/>
        <dbReference type="ChEBI" id="CHEBI:16845"/>
        <dbReference type="ChEBI" id="CHEBI:57783"/>
        <dbReference type="ChEBI" id="CHEBI:58349"/>
        <dbReference type="ChEBI" id="CHEBI:67139"/>
        <dbReference type="EC" id="1.17.1.8"/>
    </reaction>
</comment>
<comment type="pathway">
    <text evidence="1">Amino-acid biosynthesis; L-lysine biosynthesis via DAP pathway; (S)-tetrahydrodipicolinate from L-aspartate: step 4/4.</text>
</comment>
<comment type="subunit">
    <text evidence="1">Homotetramer.</text>
</comment>
<comment type="subcellular location">
    <subcellularLocation>
        <location evidence="1">Cytoplasm</location>
    </subcellularLocation>
</comment>
<comment type="similarity">
    <text evidence="1">Belongs to the DapB family.</text>
</comment>
<comment type="caution">
    <text evidence="2">Was originally thought to be a dihydrodipicolinate reductase (DHDPR), catalyzing the conversion of dihydrodipicolinate to tetrahydrodipicolinate. However, it was shown in E.coli that the substrate of the enzymatic reaction is not dihydrodipicolinate (DHDP) but in fact (2S,4S)-4-hydroxy-2,3,4,5-tetrahydrodipicolinic acid (HTPA), the product released by the DapA-catalyzed reaction.</text>
</comment>
<accession>Q6D0C7</accession>
<sequence>MKDLSIRIAVVGAGGRMGRQLIQAIEQMDGVVLGAALERSGSSLLGSDAGELAGLGKNGITVNESLDAVQNDFDILIDFTRPEGTLAHLAFCRLHRKGMIIGTTGFDDAGKAAIKQAAQDIGIVFAANFSVGVNVMLKLLEKAAKVMGDYTDIEIIEAHHRHKVDAPSGTALAMGEVIADALGRDLKSCAVYTREGHTGERDPKSIGFATVRAGDIVGEHTAMFADIGERVEITHKASSRMTFANGAVRAAIWISSKESGIFDMRDVLSLDDL</sequence>
<feature type="chain" id="PRO_0000228350" description="4-hydroxy-tetrahydrodipicolinate reductase">
    <location>
        <begin position="1"/>
        <end position="273"/>
    </location>
</feature>
<feature type="active site" description="Proton donor/acceptor" evidence="1">
    <location>
        <position position="159"/>
    </location>
</feature>
<feature type="active site" description="Proton donor" evidence="1">
    <location>
        <position position="163"/>
    </location>
</feature>
<feature type="binding site" evidence="1">
    <location>
        <begin position="12"/>
        <end position="17"/>
    </location>
    <ligand>
        <name>NAD(+)</name>
        <dbReference type="ChEBI" id="CHEBI:57540"/>
    </ligand>
</feature>
<feature type="binding site" evidence="1">
    <location>
        <position position="38"/>
    </location>
    <ligand>
        <name>NAD(+)</name>
        <dbReference type="ChEBI" id="CHEBI:57540"/>
    </ligand>
</feature>
<feature type="binding site" evidence="1">
    <location>
        <position position="39"/>
    </location>
    <ligand>
        <name>NADP(+)</name>
        <dbReference type="ChEBI" id="CHEBI:58349"/>
    </ligand>
</feature>
<feature type="binding site" evidence="1">
    <location>
        <begin position="102"/>
        <end position="104"/>
    </location>
    <ligand>
        <name>NAD(+)</name>
        <dbReference type="ChEBI" id="CHEBI:57540"/>
    </ligand>
</feature>
<feature type="binding site" evidence="1">
    <location>
        <begin position="126"/>
        <end position="129"/>
    </location>
    <ligand>
        <name>NAD(+)</name>
        <dbReference type="ChEBI" id="CHEBI:57540"/>
    </ligand>
</feature>
<feature type="binding site" evidence="1">
    <location>
        <position position="160"/>
    </location>
    <ligand>
        <name>(S)-2,3,4,5-tetrahydrodipicolinate</name>
        <dbReference type="ChEBI" id="CHEBI:16845"/>
    </ligand>
</feature>
<feature type="binding site" evidence="1">
    <location>
        <begin position="169"/>
        <end position="170"/>
    </location>
    <ligand>
        <name>(S)-2,3,4,5-tetrahydrodipicolinate</name>
        <dbReference type="ChEBI" id="CHEBI:16845"/>
    </ligand>
</feature>
<evidence type="ECO:0000255" key="1">
    <source>
        <dbReference type="HAMAP-Rule" id="MF_00102"/>
    </source>
</evidence>
<evidence type="ECO:0000305" key="2"/>
<dbReference type="EC" id="1.17.1.8" evidence="1"/>
<dbReference type="EMBL" id="BX950851">
    <property type="protein sequence ID" value="CAG76770.1"/>
    <property type="molecule type" value="Genomic_DNA"/>
</dbReference>
<dbReference type="RefSeq" id="WP_011095370.1">
    <property type="nucleotide sequence ID" value="NC_004547.2"/>
</dbReference>
<dbReference type="SMR" id="Q6D0C7"/>
<dbReference type="STRING" id="218491.ECA3872"/>
<dbReference type="KEGG" id="eca:ECA3872"/>
<dbReference type="PATRIC" id="fig|218491.5.peg.3928"/>
<dbReference type="eggNOG" id="COG0289">
    <property type="taxonomic scope" value="Bacteria"/>
</dbReference>
<dbReference type="HOGENOM" id="CLU_047479_2_1_6"/>
<dbReference type="OrthoDB" id="9790352at2"/>
<dbReference type="UniPathway" id="UPA00034">
    <property type="reaction ID" value="UER00018"/>
</dbReference>
<dbReference type="Proteomes" id="UP000007966">
    <property type="component" value="Chromosome"/>
</dbReference>
<dbReference type="GO" id="GO:0005829">
    <property type="term" value="C:cytosol"/>
    <property type="evidence" value="ECO:0007669"/>
    <property type="project" value="TreeGrafter"/>
</dbReference>
<dbReference type="GO" id="GO:0008839">
    <property type="term" value="F:4-hydroxy-tetrahydrodipicolinate reductase"/>
    <property type="evidence" value="ECO:0007669"/>
    <property type="project" value="UniProtKB-EC"/>
</dbReference>
<dbReference type="GO" id="GO:0051287">
    <property type="term" value="F:NAD binding"/>
    <property type="evidence" value="ECO:0007669"/>
    <property type="project" value="UniProtKB-UniRule"/>
</dbReference>
<dbReference type="GO" id="GO:0050661">
    <property type="term" value="F:NADP binding"/>
    <property type="evidence" value="ECO:0007669"/>
    <property type="project" value="UniProtKB-UniRule"/>
</dbReference>
<dbReference type="GO" id="GO:0016726">
    <property type="term" value="F:oxidoreductase activity, acting on CH or CH2 groups, NAD or NADP as acceptor"/>
    <property type="evidence" value="ECO:0007669"/>
    <property type="project" value="UniProtKB-UniRule"/>
</dbReference>
<dbReference type="GO" id="GO:0019877">
    <property type="term" value="P:diaminopimelate biosynthetic process"/>
    <property type="evidence" value="ECO:0007669"/>
    <property type="project" value="UniProtKB-UniRule"/>
</dbReference>
<dbReference type="GO" id="GO:0009089">
    <property type="term" value="P:lysine biosynthetic process via diaminopimelate"/>
    <property type="evidence" value="ECO:0007669"/>
    <property type="project" value="UniProtKB-UniRule"/>
</dbReference>
<dbReference type="CDD" id="cd02274">
    <property type="entry name" value="DHDPR_N"/>
    <property type="match status" value="1"/>
</dbReference>
<dbReference type="FunFam" id="3.30.360.10:FF:000004">
    <property type="entry name" value="4-hydroxy-tetrahydrodipicolinate reductase"/>
    <property type="match status" value="1"/>
</dbReference>
<dbReference type="FunFam" id="3.40.50.720:FF:000048">
    <property type="entry name" value="4-hydroxy-tetrahydrodipicolinate reductase"/>
    <property type="match status" value="1"/>
</dbReference>
<dbReference type="Gene3D" id="3.30.360.10">
    <property type="entry name" value="Dihydrodipicolinate Reductase, domain 2"/>
    <property type="match status" value="1"/>
</dbReference>
<dbReference type="Gene3D" id="3.40.50.720">
    <property type="entry name" value="NAD(P)-binding Rossmann-like Domain"/>
    <property type="match status" value="1"/>
</dbReference>
<dbReference type="HAMAP" id="MF_00102">
    <property type="entry name" value="DapB"/>
    <property type="match status" value="1"/>
</dbReference>
<dbReference type="InterPro" id="IPR022663">
    <property type="entry name" value="DapB_C"/>
</dbReference>
<dbReference type="InterPro" id="IPR000846">
    <property type="entry name" value="DapB_N"/>
</dbReference>
<dbReference type="InterPro" id="IPR022664">
    <property type="entry name" value="DapB_N_CS"/>
</dbReference>
<dbReference type="InterPro" id="IPR023940">
    <property type="entry name" value="DHDPR_bac"/>
</dbReference>
<dbReference type="InterPro" id="IPR036291">
    <property type="entry name" value="NAD(P)-bd_dom_sf"/>
</dbReference>
<dbReference type="NCBIfam" id="TIGR00036">
    <property type="entry name" value="dapB"/>
    <property type="match status" value="1"/>
</dbReference>
<dbReference type="PANTHER" id="PTHR20836:SF0">
    <property type="entry name" value="4-HYDROXY-TETRAHYDRODIPICOLINATE REDUCTASE 1, CHLOROPLASTIC-RELATED"/>
    <property type="match status" value="1"/>
</dbReference>
<dbReference type="PANTHER" id="PTHR20836">
    <property type="entry name" value="DIHYDRODIPICOLINATE REDUCTASE"/>
    <property type="match status" value="1"/>
</dbReference>
<dbReference type="Pfam" id="PF05173">
    <property type="entry name" value="DapB_C"/>
    <property type="match status" value="1"/>
</dbReference>
<dbReference type="Pfam" id="PF01113">
    <property type="entry name" value="DapB_N"/>
    <property type="match status" value="1"/>
</dbReference>
<dbReference type="PIRSF" id="PIRSF000161">
    <property type="entry name" value="DHPR"/>
    <property type="match status" value="1"/>
</dbReference>
<dbReference type="SUPFAM" id="SSF55347">
    <property type="entry name" value="Glyceraldehyde-3-phosphate dehydrogenase-like, C-terminal domain"/>
    <property type="match status" value="1"/>
</dbReference>
<dbReference type="SUPFAM" id="SSF51735">
    <property type="entry name" value="NAD(P)-binding Rossmann-fold domains"/>
    <property type="match status" value="1"/>
</dbReference>
<dbReference type="PROSITE" id="PS01298">
    <property type="entry name" value="DAPB"/>
    <property type="match status" value="1"/>
</dbReference>
<protein>
    <recommendedName>
        <fullName evidence="1">4-hydroxy-tetrahydrodipicolinate reductase</fullName>
        <shortName evidence="1">HTPA reductase</shortName>
        <ecNumber evidence="1">1.17.1.8</ecNumber>
    </recommendedName>
</protein>